<sequence>MKVIFLKDVKGKGKKGETKNVADGYANNFLIKNGYAVEANNAALSTLSAQKKKEDKLAAEELAEAKALKEKMENLTVELKAKSGEGGRLFGSITSKQIAQTLEKTHGIKIDKRKMDLPEAIRALGHTKVPVKLHHEVTATLDVHVSEE</sequence>
<evidence type="ECO:0000255" key="1">
    <source>
        <dbReference type="HAMAP-Rule" id="MF_00503"/>
    </source>
</evidence>
<evidence type="ECO:0000305" key="2"/>
<protein>
    <recommendedName>
        <fullName evidence="1">Large ribosomal subunit protein bL9</fullName>
    </recommendedName>
    <alternativeName>
        <fullName evidence="2">50S ribosomal protein L9</fullName>
    </alternativeName>
</protein>
<reference key="1">
    <citation type="journal article" date="2012" name="BMC Genomics">
        <title>Comparative genomics and transcriptomics of lineages I, II, and III strains of Listeria monocytogenes.</title>
        <authorList>
            <person name="Hain T."/>
            <person name="Ghai R."/>
            <person name="Billion A."/>
            <person name="Kuenne C.T."/>
            <person name="Steinweg C."/>
            <person name="Izar B."/>
            <person name="Mohamed W."/>
            <person name="Mraheil M."/>
            <person name="Domann E."/>
            <person name="Schaffrath S."/>
            <person name="Karst U."/>
            <person name="Goesmann A."/>
            <person name="Oehm S."/>
            <person name="Puhler A."/>
            <person name="Merkl R."/>
            <person name="Vorwerk S."/>
            <person name="Glaser P."/>
            <person name="Garrido P."/>
            <person name="Rusniok C."/>
            <person name="Buchrieser C."/>
            <person name="Goebel W."/>
            <person name="Chakraborty T."/>
        </authorList>
    </citation>
    <scope>NUCLEOTIDE SEQUENCE [LARGE SCALE GENOMIC DNA]</scope>
    <source>
        <strain>CLIP80459</strain>
    </source>
</reference>
<accession>C1KV60</accession>
<comment type="function">
    <text evidence="1">Binds to the 23S rRNA.</text>
</comment>
<comment type="similarity">
    <text evidence="1">Belongs to the bacterial ribosomal protein bL9 family.</text>
</comment>
<organism>
    <name type="scientific">Listeria monocytogenes serotype 4b (strain CLIP80459)</name>
    <dbReference type="NCBI Taxonomy" id="568819"/>
    <lineage>
        <taxon>Bacteria</taxon>
        <taxon>Bacillati</taxon>
        <taxon>Bacillota</taxon>
        <taxon>Bacilli</taxon>
        <taxon>Bacillales</taxon>
        <taxon>Listeriaceae</taxon>
        <taxon>Listeria</taxon>
    </lineage>
</organism>
<proteinExistence type="inferred from homology"/>
<dbReference type="EMBL" id="FM242711">
    <property type="protein sequence ID" value="CAS03852.1"/>
    <property type="molecule type" value="Genomic_DNA"/>
</dbReference>
<dbReference type="RefSeq" id="WP_003724881.1">
    <property type="nucleotide sequence ID" value="NC_012488.1"/>
</dbReference>
<dbReference type="SMR" id="C1KV60"/>
<dbReference type="KEGG" id="lmc:Lm4b_00062"/>
<dbReference type="HOGENOM" id="CLU_078938_3_2_9"/>
<dbReference type="GO" id="GO:1990904">
    <property type="term" value="C:ribonucleoprotein complex"/>
    <property type="evidence" value="ECO:0007669"/>
    <property type="project" value="UniProtKB-KW"/>
</dbReference>
<dbReference type="GO" id="GO:0005840">
    <property type="term" value="C:ribosome"/>
    <property type="evidence" value="ECO:0007669"/>
    <property type="project" value="UniProtKB-KW"/>
</dbReference>
<dbReference type="GO" id="GO:0019843">
    <property type="term" value="F:rRNA binding"/>
    <property type="evidence" value="ECO:0007669"/>
    <property type="project" value="UniProtKB-UniRule"/>
</dbReference>
<dbReference type="GO" id="GO:0003735">
    <property type="term" value="F:structural constituent of ribosome"/>
    <property type="evidence" value="ECO:0007669"/>
    <property type="project" value="InterPro"/>
</dbReference>
<dbReference type="GO" id="GO:0006412">
    <property type="term" value="P:translation"/>
    <property type="evidence" value="ECO:0007669"/>
    <property type="project" value="UniProtKB-UniRule"/>
</dbReference>
<dbReference type="FunFam" id="3.10.430.100:FF:000002">
    <property type="entry name" value="50S ribosomal protein L9"/>
    <property type="match status" value="1"/>
</dbReference>
<dbReference type="FunFam" id="3.40.5.10:FF:000002">
    <property type="entry name" value="50S ribosomal protein L9"/>
    <property type="match status" value="1"/>
</dbReference>
<dbReference type="Gene3D" id="3.10.430.100">
    <property type="entry name" value="Ribosomal protein L9, C-terminal domain"/>
    <property type="match status" value="1"/>
</dbReference>
<dbReference type="Gene3D" id="3.40.5.10">
    <property type="entry name" value="Ribosomal protein L9, N-terminal domain"/>
    <property type="match status" value="1"/>
</dbReference>
<dbReference type="HAMAP" id="MF_00503">
    <property type="entry name" value="Ribosomal_bL9"/>
    <property type="match status" value="1"/>
</dbReference>
<dbReference type="InterPro" id="IPR000244">
    <property type="entry name" value="Ribosomal_bL9"/>
</dbReference>
<dbReference type="InterPro" id="IPR009027">
    <property type="entry name" value="Ribosomal_bL9/RNase_H1_N"/>
</dbReference>
<dbReference type="InterPro" id="IPR020594">
    <property type="entry name" value="Ribosomal_bL9_bac/chp"/>
</dbReference>
<dbReference type="InterPro" id="IPR020069">
    <property type="entry name" value="Ribosomal_bL9_C"/>
</dbReference>
<dbReference type="InterPro" id="IPR036791">
    <property type="entry name" value="Ribosomal_bL9_C_sf"/>
</dbReference>
<dbReference type="InterPro" id="IPR020070">
    <property type="entry name" value="Ribosomal_bL9_N"/>
</dbReference>
<dbReference type="InterPro" id="IPR036935">
    <property type="entry name" value="Ribosomal_bL9_N_sf"/>
</dbReference>
<dbReference type="NCBIfam" id="TIGR00158">
    <property type="entry name" value="L9"/>
    <property type="match status" value="1"/>
</dbReference>
<dbReference type="PANTHER" id="PTHR21368">
    <property type="entry name" value="50S RIBOSOMAL PROTEIN L9"/>
    <property type="match status" value="1"/>
</dbReference>
<dbReference type="Pfam" id="PF03948">
    <property type="entry name" value="Ribosomal_L9_C"/>
    <property type="match status" value="1"/>
</dbReference>
<dbReference type="Pfam" id="PF01281">
    <property type="entry name" value="Ribosomal_L9_N"/>
    <property type="match status" value="1"/>
</dbReference>
<dbReference type="SUPFAM" id="SSF55658">
    <property type="entry name" value="L9 N-domain-like"/>
    <property type="match status" value="1"/>
</dbReference>
<dbReference type="SUPFAM" id="SSF55653">
    <property type="entry name" value="Ribosomal protein L9 C-domain"/>
    <property type="match status" value="1"/>
</dbReference>
<dbReference type="PROSITE" id="PS00651">
    <property type="entry name" value="RIBOSOMAL_L9"/>
    <property type="match status" value="1"/>
</dbReference>
<feature type="chain" id="PRO_1000206555" description="Large ribosomal subunit protein bL9">
    <location>
        <begin position="1"/>
        <end position="148"/>
    </location>
</feature>
<gene>
    <name evidence="1" type="primary">rplI</name>
    <name type="ordered locus">Lm4b_00062</name>
</gene>
<name>RL9_LISMC</name>
<keyword id="KW-0687">Ribonucleoprotein</keyword>
<keyword id="KW-0689">Ribosomal protein</keyword>
<keyword id="KW-0694">RNA-binding</keyword>
<keyword id="KW-0699">rRNA-binding</keyword>